<name>SNF7_CRYNJ</name>
<dbReference type="EMBL" id="AE017343">
    <property type="protein sequence ID" value="AAW42105.1"/>
    <property type="molecule type" value="Genomic_DNA"/>
</dbReference>
<dbReference type="RefSeq" id="XP_569412.1">
    <property type="nucleotide sequence ID" value="XM_569412.1"/>
</dbReference>
<dbReference type="SMR" id="P0CR54"/>
<dbReference type="FunCoup" id="P0CR54">
    <property type="interactions" value="278"/>
</dbReference>
<dbReference type="STRING" id="214684.P0CR54"/>
<dbReference type="PaxDb" id="214684-P0CR54"/>
<dbReference type="EnsemblFungi" id="AAW42105">
    <property type="protein sequence ID" value="AAW42105"/>
    <property type="gene ID" value="CNC00960"/>
</dbReference>
<dbReference type="GeneID" id="3256554"/>
<dbReference type="KEGG" id="cne:CNC00960"/>
<dbReference type="VEuPathDB" id="FungiDB:CNC00960"/>
<dbReference type="eggNOG" id="KOG1656">
    <property type="taxonomic scope" value="Eukaryota"/>
</dbReference>
<dbReference type="HOGENOM" id="CLU_071097_1_1_1"/>
<dbReference type="InParanoid" id="P0CR54"/>
<dbReference type="OMA" id="MKQIHGG"/>
<dbReference type="OrthoDB" id="5592979at2759"/>
<dbReference type="Proteomes" id="UP000002149">
    <property type="component" value="Chromosome 3"/>
</dbReference>
<dbReference type="GO" id="GO:0009898">
    <property type="term" value="C:cytoplasmic side of plasma membrane"/>
    <property type="evidence" value="ECO:0000318"/>
    <property type="project" value="GO_Central"/>
</dbReference>
<dbReference type="GO" id="GO:0005829">
    <property type="term" value="C:cytosol"/>
    <property type="evidence" value="ECO:0007669"/>
    <property type="project" value="EnsemblFungi"/>
</dbReference>
<dbReference type="GO" id="GO:0000815">
    <property type="term" value="C:ESCRT III complex"/>
    <property type="evidence" value="ECO:0000318"/>
    <property type="project" value="GO_Central"/>
</dbReference>
<dbReference type="GO" id="GO:0005771">
    <property type="term" value="C:multivesicular body"/>
    <property type="evidence" value="ECO:0000318"/>
    <property type="project" value="GO_Central"/>
</dbReference>
<dbReference type="GO" id="GO:0042802">
    <property type="term" value="F:identical protein binding"/>
    <property type="evidence" value="ECO:0007669"/>
    <property type="project" value="EnsemblFungi"/>
</dbReference>
<dbReference type="GO" id="GO:1904669">
    <property type="term" value="P:ATP export"/>
    <property type="evidence" value="ECO:0007669"/>
    <property type="project" value="EnsemblFungi"/>
</dbReference>
<dbReference type="GO" id="GO:0070676">
    <property type="term" value="P:intralumenal vesicle formation"/>
    <property type="evidence" value="ECO:0007669"/>
    <property type="project" value="EnsemblFungi"/>
</dbReference>
<dbReference type="GO" id="GO:0032511">
    <property type="term" value="P:late endosome to vacuole transport via multivesicular body sorting pathway"/>
    <property type="evidence" value="ECO:0000318"/>
    <property type="project" value="GO_Central"/>
</dbReference>
<dbReference type="GO" id="GO:0007031">
    <property type="term" value="P:peroxisome organization"/>
    <property type="evidence" value="ECO:0007669"/>
    <property type="project" value="EnsemblFungi"/>
</dbReference>
<dbReference type="GO" id="GO:0043328">
    <property type="term" value="P:protein transport to vacuole involved in ubiquitin-dependent protein catabolic process via the multivesicular body sorting pathway"/>
    <property type="evidence" value="ECO:0007669"/>
    <property type="project" value="EnsemblFungi"/>
</dbReference>
<dbReference type="GO" id="GO:0061709">
    <property type="term" value="P:reticulophagy"/>
    <property type="evidence" value="ECO:0007669"/>
    <property type="project" value="EnsemblFungi"/>
</dbReference>
<dbReference type="GO" id="GO:0006900">
    <property type="term" value="P:vesicle budding from membrane"/>
    <property type="evidence" value="ECO:0000318"/>
    <property type="project" value="GO_Central"/>
</dbReference>
<dbReference type="Gene3D" id="6.10.250.1710">
    <property type="match status" value="1"/>
</dbReference>
<dbReference type="Gene3D" id="1.10.287.1060">
    <property type="entry name" value="ESAT-6-like"/>
    <property type="match status" value="1"/>
</dbReference>
<dbReference type="InterPro" id="IPR005024">
    <property type="entry name" value="Snf7_fam"/>
</dbReference>
<dbReference type="PANTHER" id="PTHR22761">
    <property type="entry name" value="CHARGED MULTIVESICULAR BODY PROTEIN"/>
    <property type="match status" value="1"/>
</dbReference>
<dbReference type="PANTHER" id="PTHR22761:SF10">
    <property type="entry name" value="GH13992P"/>
    <property type="match status" value="1"/>
</dbReference>
<dbReference type="Pfam" id="PF03357">
    <property type="entry name" value="Snf7"/>
    <property type="match status" value="1"/>
</dbReference>
<reference key="1">
    <citation type="journal article" date="2005" name="Science">
        <title>The genome of the basidiomycetous yeast and human pathogen Cryptococcus neoformans.</title>
        <authorList>
            <person name="Loftus B.J."/>
            <person name="Fung E."/>
            <person name="Roncaglia P."/>
            <person name="Rowley D."/>
            <person name="Amedeo P."/>
            <person name="Bruno D."/>
            <person name="Vamathevan J."/>
            <person name="Miranda M."/>
            <person name="Anderson I.J."/>
            <person name="Fraser J.A."/>
            <person name="Allen J.E."/>
            <person name="Bosdet I.E."/>
            <person name="Brent M.R."/>
            <person name="Chiu R."/>
            <person name="Doering T.L."/>
            <person name="Donlin M.J."/>
            <person name="D'Souza C.A."/>
            <person name="Fox D.S."/>
            <person name="Grinberg V."/>
            <person name="Fu J."/>
            <person name="Fukushima M."/>
            <person name="Haas B.J."/>
            <person name="Huang J.C."/>
            <person name="Janbon G."/>
            <person name="Jones S.J.M."/>
            <person name="Koo H.L."/>
            <person name="Krzywinski M.I."/>
            <person name="Kwon-Chung K.J."/>
            <person name="Lengeler K.B."/>
            <person name="Maiti R."/>
            <person name="Marra M.A."/>
            <person name="Marra R.E."/>
            <person name="Mathewson C.A."/>
            <person name="Mitchell T.G."/>
            <person name="Pertea M."/>
            <person name="Riggs F.R."/>
            <person name="Salzberg S.L."/>
            <person name="Schein J.E."/>
            <person name="Shvartsbeyn A."/>
            <person name="Shin H."/>
            <person name="Shumway M."/>
            <person name="Specht C.A."/>
            <person name="Suh B.B."/>
            <person name="Tenney A."/>
            <person name="Utterback T.R."/>
            <person name="Wickes B.L."/>
            <person name="Wortman J.R."/>
            <person name="Wye N.H."/>
            <person name="Kronstad J.W."/>
            <person name="Lodge J.K."/>
            <person name="Heitman J."/>
            <person name="Davis R.W."/>
            <person name="Fraser C.M."/>
            <person name="Hyman R.W."/>
        </authorList>
    </citation>
    <scope>NUCLEOTIDE SEQUENCE [LARGE SCALE GENOMIC DNA]</scope>
    <source>
        <strain>JEC21 / ATCC MYA-565</strain>
    </source>
</reference>
<accession>P0CR54</accession>
<accession>Q55V53</accession>
<accession>Q5KL29</accession>
<evidence type="ECO:0000250" key="1"/>
<evidence type="ECO:0000255" key="2"/>
<evidence type="ECO:0000256" key="3">
    <source>
        <dbReference type="SAM" id="MobiDB-lite"/>
    </source>
</evidence>
<evidence type="ECO:0000305" key="4"/>
<organism>
    <name type="scientific">Cryptococcus neoformans var. neoformans serotype D (strain JEC21 / ATCC MYA-565)</name>
    <name type="common">Filobasidiella neoformans</name>
    <dbReference type="NCBI Taxonomy" id="214684"/>
    <lineage>
        <taxon>Eukaryota</taxon>
        <taxon>Fungi</taxon>
        <taxon>Dikarya</taxon>
        <taxon>Basidiomycota</taxon>
        <taxon>Agaricomycotina</taxon>
        <taxon>Tremellomycetes</taxon>
        <taxon>Tremellales</taxon>
        <taxon>Cryptococcaceae</taxon>
        <taxon>Cryptococcus</taxon>
        <taxon>Cryptococcus neoformans species complex</taxon>
    </lineage>
</organism>
<comment type="function">
    <text evidence="1">Required for the sorting and concentration of proteins resulting in the entry of these proteins into the invaginating vesicles of the multivesicular body (MVB). Also required for the proteolytic cleavage of the transcription factor RIM101 in response to alkaline ambient pH (By similarity).</text>
</comment>
<comment type="subunit">
    <text evidence="1">A component of the endosomal sorting required for transport complex III (ESCRT-III).</text>
</comment>
<comment type="subcellular location">
    <subcellularLocation>
        <location evidence="1">Cytoplasm</location>
    </subcellularLocation>
    <subcellularLocation>
        <location evidence="1">Endosome membrane</location>
        <topology evidence="1">Peripheral membrane protein</topology>
    </subcellularLocation>
</comment>
<comment type="similarity">
    <text evidence="4">Belongs to the SNF7 family.</text>
</comment>
<feature type="chain" id="PRO_0000211439" description="Vacuolar-sorting protein SNF7">
    <location>
        <begin position="1"/>
        <end position="220"/>
    </location>
</feature>
<feature type="region of interest" description="Disordered" evidence="3">
    <location>
        <begin position="175"/>
        <end position="210"/>
    </location>
</feature>
<feature type="coiled-coil region" evidence="2">
    <location>
        <begin position="15"/>
        <end position="86"/>
    </location>
</feature>
<feature type="coiled-coil region" evidence="2">
    <location>
        <begin position="153"/>
        <end position="220"/>
    </location>
</feature>
<proteinExistence type="inferred from homology"/>
<protein>
    <recommendedName>
        <fullName>Vacuolar-sorting protein SNF7</fullName>
    </recommendedName>
    <alternativeName>
        <fullName>Vacuolar protein-sorting-associated protein 32</fullName>
    </alternativeName>
</protein>
<gene>
    <name type="primary">SNF7</name>
    <name type="synonym">VPS32</name>
    <name type="ordered locus">CNC00960</name>
</gene>
<sequence>MSGWMSYFTGRKDTRESARDAIVGLRQQLLMLEKKEEFLQKKIEEEMKKAKANATGNKRLAMAALRQKKAHENELDRIAGTRLTLETQVNAIESANLNAETMVAMKKGADALKGIHSNLTAEGVDATMDKIREQMDLTNDISDAISNPVGMGIVLDEDDLKEELEALEQEQLDDRLAGADRVPSHLPASPVGQTTGRAAVEEDEDDEEAQLRKLQAELAM</sequence>
<keyword id="KW-0175">Coiled coil</keyword>
<keyword id="KW-0963">Cytoplasm</keyword>
<keyword id="KW-0967">Endosome</keyword>
<keyword id="KW-0472">Membrane</keyword>
<keyword id="KW-1185">Reference proteome</keyword>